<gene>
    <name type="primary">cpcE</name>
    <name type="ordered locus">tlr1961</name>
</gene>
<protein>
    <recommendedName>
        <fullName>Phycocyanobilin lyase subunit alpha</fullName>
        <ecNumber>4.-.-.-</ecNumber>
    </recommendedName>
    <alternativeName>
        <fullName>Phycocyanin operon protein CpcE</fullName>
    </alternativeName>
</protein>
<name>CPCE_THEVB</name>
<dbReference type="EC" id="4.-.-.-"/>
<dbReference type="EMBL" id="D13173">
    <property type="protein sequence ID" value="BAA02459.1"/>
    <property type="molecule type" value="Genomic_DNA"/>
</dbReference>
<dbReference type="EMBL" id="BA000039">
    <property type="protein sequence ID" value="BAC09513.1"/>
    <property type="molecule type" value="Genomic_DNA"/>
</dbReference>
<dbReference type="RefSeq" id="NP_682751.1">
    <property type="nucleotide sequence ID" value="NC_004113.1"/>
</dbReference>
<dbReference type="RefSeq" id="WP_011057796.1">
    <property type="nucleotide sequence ID" value="NC_004113.1"/>
</dbReference>
<dbReference type="SMR" id="P50037"/>
<dbReference type="STRING" id="197221.gene:10748568"/>
<dbReference type="EnsemblBacteria" id="BAC09513">
    <property type="protein sequence ID" value="BAC09513"/>
    <property type="gene ID" value="BAC09513"/>
</dbReference>
<dbReference type="KEGG" id="tel:tlr1961"/>
<dbReference type="PATRIC" id="fig|197221.4.peg.2051"/>
<dbReference type="eggNOG" id="COG1413">
    <property type="taxonomic scope" value="Bacteria"/>
</dbReference>
<dbReference type="Proteomes" id="UP000000440">
    <property type="component" value="Chromosome"/>
</dbReference>
<dbReference type="GO" id="GO:0030089">
    <property type="term" value="C:phycobilisome"/>
    <property type="evidence" value="ECO:0007669"/>
    <property type="project" value="UniProtKB-KW"/>
</dbReference>
<dbReference type="GO" id="GO:0016829">
    <property type="term" value="F:lyase activity"/>
    <property type="evidence" value="ECO:0007669"/>
    <property type="project" value="UniProtKB-KW"/>
</dbReference>
<dbReference type="GO" id="GO:0016491">
    <property type="term" value="F:oxidoreductase activity"/>
    <property type="evidence" value="ECO:0007669"/>
    <property type="project" value="TreeGrafter"/>
</dbReference>
<dbReference type="Gene3D" id="1.25.10.10">
    <property type="entry name" value="Leucine-rich Repeat Variant"/>
    <property type="match status" value="2"/>
</dbReference>
<dbReference type="InterPro" id="IPR011989">
    <property type="entry name" value="ARM-like"/>
</dbReference>
<dbReference type="InterPro" id="IPR016024">
    <property type="entry name" value="ARM-type_fold"/>
</dbReference>
<dbReference type="InterPro" id="IPR004155">
    <property type="entry name" value="PBS_lyase_HEAT"/>
</dbReference>
<dbReference type="PANTHER" id="PTHR12697:SF5">
    <property type="entry name" value="DEOXYHYPUSINE HYDROXYLASE"/>
    <property type="match status" value="1"/>
</dbReference>
<dbReference type="PANTHER" id="PTHR12697">
    <property type="entry name" value="PBS LYASE HEAT-LIKE PROTEIN"/>
    <property type="match status" value="1"/>
</dbReference>
<dbReference type="Pfam" id="PF13646">
    <property type="entry name" value="HEAT_2"/>
    <property type="match status" value="2"/>
</dbReference>
<dbReference type="Pfam" id="PF03130">
    <property type="entry name" value="HEAT_PBS"/>
    <property type="match status" value="1"/>
</dbReference>
<dbReference type="SMART" id="SM00567">
    <property type="entry name" value="EZ_HEAT"/>
    <property type="match status" value="6"/>
</dbReference>
<dbReference type="SUPFAM" id="SSF48371">
    <property type="entry name" value="ARM repeat"/>
    <property type="match status" value="1"/>
</dbReference>
<accession>P50037</accession>
<feature type="chain" id="PRO_0000199269" description="Phycocyanobilin lyase subunit alpha">
    <location>
        <begin position="1"/>
        <end position="276"/>
    </location>
</feature>
<keyword id="KW-0042">Antenna complex</keyword>
<keyword id="KW-0456">Lyase</keyword>
<keyword id="KW-0605">Phycobilisome</keyword>
<keyword id="KW-1185">Reference proteome</keyword>
<comment type="function">
    <text evidence="1">Required for the chromophorylation of the CpcA gene product.</text>
</comment>
<comment type="subunit">
    <text evidence="1">CpcE and CpcF associate to form a lyase.</text>
</comment>
<comment type="similarity">
    <text evidence="2">Belongs to the CpcE/RpcE/PecE family.</text>
</comment>
<proteinExistence type="inferred from homology"/>
<evidence type="ECO:0000250" key="1"/>
<evidence type="ECO:0000305" key="2"/>
<sequence length="276" mass="29354">MSGEGMTAVSEPVQLTVPQMLAQLQGTDTSLRYYAAWWLGKFGLETATAAERQAIVSALIAALADEADRTELGGYPLRRNAARALGKLGDRQAVPALIECLRCEDFYVREAAAIALGQLGDPRAIAPLQSLLEGGVAMARLVPGRPHLVQPVEAVIESLGHLGATEAIALIEPFLAHEMPRVQFAAARALFQLTGDAVYGDRLLAALNSEDVQLRRTALLDLGAMGYLPAAEAILQAGVEASFKLIALHGILGQQLRQAAPAEQTLSLFQGLDQLL</sequence>
<organism>
    <name type="scientific">Thermosynechococcus vestitus (strain NIES-2133 / IAM M-273 / BP-1)</name>
    <dbReference type="NCBI Taxonomy" id="197221"/>
    <lineage>
        <taxon>Bacteria</taxon>
        <taxon>Bacillati</taxon>
        <taxon>Cyanobacteriota</taxon>
        <taxon>Cyanophyceae</taxon>
        <taxon>Acaryochloridales</taxon>
        <taxon>Thermosynechococcaceae</taxon>
        <taxon>Thermosynechococcus</taxon>
    </lineage>
</organism>
<reference key="1">
    <citation type="submission" date="1992-09" db="EMBL/GenBank/DDBJ databases">
        <title>Cloning and sequencing of the phycocyanin operon from the thermophilic cyanobacterium Synechococcus elongatus.</title>
        <authorList>
            <person name="Shimazu T."/>
            <person name="Soga M."/>
            <person name="Hirano M."/>
            <person name="Katoh S."/>
        </authorList>
    </citation>
    <scope>NUCLEOTIDE SEQUENCE [GENOMIC DNA]</scope>
</reference>
<reference key="2">
    <citation type="journal article" date="2002" name="DNA Res.">
        <title>Complete genome structure of the thermophilic cyanobacterium Thermosynechococcus elongatus BP-1.</title>
        <authorList>
            <person name="Nakamura Y."/>
            <person name="Kaneko T."/>
            <person name="Sato S."/>
            <person name="Ikeuchi M."/>
            <person name="Katoh H."/>
            <person name="Sasamoto S."/>
            <person name="Watanabe A."/>
            <person name="Iriguchi M."/>
            <person name="Kawashima K."/>
            <person name="Kimura T."/>
            <person name="Kishida Y."/>
            <person name="Kiyokawa C."/>
            <person name="Kohara M."/>
            <person name="Matsumoto M."/>
            <person name="Matsuno A."/>
            <person name="Nakazaki N."/>
            <person name="Shimpo S."/>
            <person name="Sugimoto M."/>
            <person name="Takeuchi C."/>
            <person name="Yamada M."/>
            <person name="Tabata S."/>
        </authorList>
    </citation>
    <scope>NUCLEOTIDE SEQUENCE [LARGE SCALE GENOMIC DNA]</scope>
    <source>
        <strain>NIES-2133 / IAM M-273 / BP-1</strain>
    </source>
</reference>